<accession>P35661</accession>
<accession>G4VKM5</accession>
<keyword id="KW-1185">Reference proteome</keyword>
<keyword id="KW-0808">Transferase</keyword>
<name>GST27_SCHMA</name>
<feature type="chain" id="PRO_0000185811" description="Glutathione S-transferase class-mu 26 kDa isozyme">
    <location>
        <begin position="1"/>
        <end position="195"/>
    </location>
</feature>
<feature type="domain" description="GST N-terminal">
    <location>
        <begin position="1"/>
        <end position="83"/>
    </location>
</feature>
<feature type="domain" description="GST C-terminal">
    <location>
        <begin position="85"/>
        <end position="195"/>
    </location>
</feature>
<feature type="binding site" evidence="2">
    <location>
        <begin position="7"/>
        <end position="8"/>
    </location>
    <ligand>
        <name>glutathione</name>
        <dbReference type="ChEBI" id="CHEBI:57925"/>
    </ligand>
</feature>
<feature type="binding site" evidence="2">
    <location>
        <begin position="41"/>
        <end position="45"/>
    </location>
    <ligand>
        <name>glutathione</name>
        <dbReference type="ChEBI" id="CHEBI:57925"/>
    </ligand>
</feature>
<feature type="binding site" evidence="2">
    <location>
        <begin position="54"/>
        <end position="55"/>
    </location>
    <ligand>
        <name>glutathione</name>
        <dbReference type="ChEBI" id="CHEBI:57925"/>
    </ligand>
</feature>
<feature type="binding site" evidence="2">
    <location>
        <begin position="67"/>
        <end position="68"/>
    </location>
    <ligand>
        <name>glutathione</name>
        <dbReference type="ChEBI" id="CHEBI:57925"/>
    </ligand>
</feature>
<feature type="binding site" evidence="1">
    <location>
        <position position="111"/>
    </location>
    <ligand>
        <name>substrate</name>
    </ligand>
</feature>
<sequence>MAPKLGYWKIKGLVQPTRLLLEYLGEAYEERLYDRNDGDVWRNEKFKLGLDFPNLPYYIDGDVKLTQSMAILRYIADKHNMLGGCPKERAEISMLEGAILDIRYGVSRIAYNKEFETLKVDFLNQLPGMLKMFEDRLSHNTYLNGDKVTHPDFMLYDALDVNLPPIKNYLNSNRYIKWPLQGWSATFGGGDAPPK</sequence>
<dbReference type="EC" id="2.5.1.18"/>
<dbReference type="EMBL" id="M73624">
    <property type="status" value="NOT_ANNOTATED_CDS"/>
    <property type="molecule type" value="mRNA"/>
</dbReference>
<dbReference type="EMBL" id="HE601628">
    <property type="protein sequence ID" value="CCD80234.1"/>
    <property type="molecule type" value="Genomic_DNA"/>
</dbReference>
<dbReference type="PIR" id="A45556">
    <property type="entry name" value="A45556"/>
</dbReference>
<dbReference type="RefSeq" id="XP_018652834.1">
    <property type="nucleotide sequence ID" value="XM_018797832.1"/>
</dbReference>
<dbReference type="SMR" id="P35661"/>
<dbReference type="STRING" id="6183.P35661"/>
<dbReference type="GeneID" id="8348519"/>
<dbReference type="KEGG" id="smm:Smp_102070"/>
<dbReference type="CTD" id="8348519"/>
<dbReference type="eggNOG" id="KOG1695">
    <property type="taxonomic scope" value="Eukaryota"/>
</dbReference>
<dbReference type="HOGENOM" id="CLU_039475_2_0_1"/>
<dbReference type="InParanoid" id="P35661"/>
<dbReference type="OrthoDB" id="4951845at2759"/>
<dbReference type="PhylomeDB" id="P35661"/>
<dbReference type="Proteomes" id="UP000008854">
    <property type="component" value="Chromosome 5"/>
</dbReference>
<dbReference type="GO" id="GO:0004364">
    <property type="term" value="F:glutathione transferase activity"/>
    <property type="evidence" value="ECO:0007669"/>
    <property type="project" value="UniProtKB-EC"/>
</dbReference>
<dbReference type="GO" id="GO:0006749">
    <property type="term" value="P:glutathione metabolic process"/>
    <property type="evidence" value="ECO:0007669"/>
    <property type="project" value="TreeGrafter"/>
</dbReference>
<dbReference type="CDD" id="cd03075">
    <property type="entry name" value="GST_N_Mu"/>
    <property type="match status" value="1"/>
</dbReference>
<dbReference type="FunFam" id="1.20.1050.10:FF:000101">
    <property type="entry name" value="Glutathione S-transferase Mu 4"/>
    <property type="match status" value="1"/>
</dbReference>
<dbReference type="Gene3D" id="1.20.1050.130">
    <property type="match status" value="1"/>
</dbReference>
<dbReference type="InterPro" id="IPR010987">
    <property type="entry name" value="Glutathione-S-Trfase_C-like"/>
</dbReference>
<dbReference type="InterPro" id="IPR036282">
    <property type="entry name" value="Glutathione-S-Trfase_C_sf"/>
</dbReference>
<dbReference type="InterPro" id="IPR040079">
    <property type="entry name" value="Glutathione_S-Trfase"/>
</dbReference>
<dbReference type="InterPro" id="IPR004045">
    <property type="entry name" value="Glutathione_S-Trfase_N"/>
</dbReference>
<dbReference type="InterPro" id="IPR004046">
    <property type="entry name" value="GST_C"/>
</dbReference>
<dbReference type="InterPro" id="IPR050213">
    <property type="entry name" value="GST_superfamily"/>
</dbReference>
<dbReference type="InterPro" id="IPR036249">
    <property type="entry name" value="Thioredoxin-like_sf"/>
</dbReference>
<dbReference type="PANTHER" id="PTHR11571">
    <property type="entry name" value="GLUTATHIONE S-TRANSFERASE"/>
    <property type="match status" value="1"/>
</dbReference>
<dbReference type="PANTHER" id="PTHR11571:SF222">
    <property type="entry name" value="GLUTATHIONE TRANSFERASE"/>
    <property type="match status" value="1"/>
</dbReference>
<dbReference type="Pfam" id="PF14497">
    <property type="entry name" value="GST_C_3"/>
    <property type="match status" value="1"/>
</dbReference>
<dbReference type="Pfam" id="PF02798">
    <property type="entry name" value="GST_N"/>
    <property type="match status" value="1"/>
</dbReference>
<dbReference type="SFLD" id="SFLDS00019">
    <property type="entry name" value="Glutathione_Transferase_(cytos"/>
    <property type="match status" value="1"/>
</dbReference>
<dbReference type="SUPFAM" id="SSF47616">
    <property type="entry name" value="GST C-terminal domain-like"/>
    <property type="match status" value="1"/>
</dbReference>
<dbReference type="SUPFAM" id="SSF52833">
    <property type="entry name" value="Thioredoxin-like"/>
    <property type="match status" value="1"/>
</dbReference>
<dbReference type="PROSITE" id="PS50405">
    <property type="entry name" value="GST_CTER"/>
    <property type="match status" value="1"/>
</dbReference>
<dbReference type="PROSITE" id="PS50404">
    <property type="entry name" value="GST_NTER"/>
    <property type="match status" value="1"/>
</dbReference>
<comment type="function">
    <text>Conjugation of reduced glutathione to a wide number of exogenous and endogenous hydrophobic electrophiles.</text>
</comment>
<comment type="function">
    <text>GST isoenzymes appear to play a central role in the parasite detoxification system. Other functions are also suspected including a role in increasing the solubility of haematin in the parasite gut.</text>
</comment>
<comment type="catalytic activity">
    <reaction>
        <text>RX + glutathione = an S-substituted glutathione + a halide anion + H(+)</text>
        <dbReference type="Rhea" id="RHEA:16437"/>
        <dbReference type="ChEBI" id="CHEBI:15378"/>
        <dbReference type="ChEBI" id="CHEBI:16042"/>
        <dbReference type="ChEBI" id="CHEBI:17792"/>
        <dbReference type="ChEBI" id="CHEBI:57925"/>
        <dbReference type="ChEBI" id="CHEBI:90779"/>
        <dbReference type="EC" id="2.5.1.18"/>
    </reaction>
</comment>
<comment type="subunit">
    <text>Homodimer.</text>
</comment>
<comment type="similarity">
    <text evidence="3">Belongs to the GST superfamily. Mu family.</text>
</comment>
<proteinExistence type="evidence at transcript level"/>
<organism>
    <name type="scientific">Schistosoma mansoni</name>
    <name type="common">Blood fluke</name>
    <dbReference type="NCBI Taxonomy" id="6183"/>
    <lineage>
        <taxon>Eukaryota</taxon>
        <taxon>Metazoa</taxon>
        <taxon>Spiralia</taxon>
        <taxon>Lophotrochozoa</taxon>
        <taxon>Platyhelminthes</taxon>
        <taxon>Trematoda</taxon>
        <taxon>Digenea</taxon>
        <taxon>Strigeidida</taxon>
        <taxon>Schistosomatoidea</taxon>
        <taxon>Schistosomatidae</taxon>
        <taxon>Schistosoma</taxon>
    </lineage>
</organism>
<protein>
    <recommendedName>
        <fullName>Glutathione S-transferase class-mu 26 kDa isozyme</fullName>
        <shortName>GST 26</shortName>
        <ecNumber>2.5.1.18</ecNumber>
    </recommendedName>
    <alternativeName>
        <fullName>Sm26/2 antigen</fullName>
    </alternativeName>
</protein>
<evidence type="ECO:0000250" key="1"/>
<evidence type="ECO:0000250" key="2">
    <source>
        <dbReference type="UniProtKB" id="P08515"/>
    </source>
</evidence>
<evidence type="ECO:0000305" key="3"/>
<gene>
    <name type="ORF">Smp_102070</name>
</gene>
<reference key="1">
    <citation type="journal article" date="1991" name="Mol. Biochem. Parasitol.">
        <title>Another 26-kilodalton glutathione S-transferase of Schistosoma mansoni.</title>
        <authorList>
            <person name="Wright M.D."/>
            <person name="Harrison R.A."/>
            <person name="Melder A.M."/>
            <person name="Newport G.R."/>
            <person name="Mitchell G.F."/>
        </authorList>
    </citation>
    <scope>NUCLEOTIDE SEQUENCE [MRNA]</scope>
</reference>
<reference key="2">
    <citation type="journal article" date="2009" name="Nature">
        <title>The genome of the blood fluke Schistosoma mansoni.</title>
        <authorList>
            <person name="Berriman M."/>
            <person name="Haas B.J."/>
            <person name="LoVerde P.T."/>
            <person name="Wilson R.A."/>
            <person name="Dillon G.P."/>
            <person name="Cerqueira G.C."/>
            <person name="Mashiyama S.T."/>
            <person name="Al-Lazikani B."/>
            <person name="Andrade L.F."/>
            <person name="Ashton P.D."/>
            <person name="Aslett M.A."/>
            <person name="Bartholomeu D.C."/>
            <person name="Blandin G."/>
            <person name="Caffrey C.R."/>
            <person name="Coghlan A."/>
            <person name="Coulson R."/>
            <person name="Day T.A."/>
            <person name="Delcher A."/>
            <person name="DeMarco R."/>
            <person name="Djikeng A."/>
            <person name="Eyre T."/>
            <person name="Gamble J.A."/>
            <person name="Ghedin E."/>
            <person name="Gu Y."/>
            <person name="Hertz-Fowler C."/>
            <person name="Hirai H."/>
            <person name="Hirai Y."/>
            <person name="Houston R."/>
            <person name="Ivens A."/>
            <person name="Johnston D.A."/>
            <person name="Lacerda D."/>
            <person name="Macedo C.D."/>
            <person name="McVeigh P."/>
            <person name="Ning Z."/>
            <person name="Oliveira G."/>
            <person name="Overington J.P."/>
            <person name="Parkhill J."/>
            <person name="Pertea M."/>
            <person name="Pierce R.J."/>
            <person name="Protasio A.V."/>
            <person name="Quail M.A."/>
            <person name="Rajandream M.A."/>
            <person name="Rogers J."/>
            <person name="Sajid M."/>
            <person name="Salzberg S.L."/>
            <person name="Stanke M."/>
            <person name="Tivey A.R."/>
            <person name="White O."/>
            <person name="Williams D.L."/>
            <person name="Wortman J."/>
            <person name="Wu W."/>
            <person name="Zamanian M."/>
            <person name="Zerlotini A."/>
            <person name="Fraser-Liggett C.M."/>
            <person name="Barrell B.G."/>
            <person name="El-Sayed N.M."/>
        </authorList>
    </citation>
    <scope>NUCLEOTIDE SEQUENCE [LARGE SCALE GENOMIC DNA]</scope>
    <source>
        <strain>Puerto Rican</strain>
    </source>
</reference>
<reference key="3">
    <citation type="journal article" date="2012" name="PLoS Negl. Trop. Dis.">
        <title>A systematically improved high quality genome and transcriptome of the human blood fluke Schistosoma mansoni.</title>
        <authorList>
            <person name="Protasio A.V."/>
            <person name="Tsai I.J."/>
            <person name="Babbage A."/>
            <person name="Nichol S."/>
            <person name="Hunt M."/>
            <person name="Aslett M.A."/>
            <person name="De Silva N."/>
            <person name="Velarde G.S."/>
            <person name="Anderson T.J."/>
            <person name="Clark R.C."/>
            <person name="Davidson C."/>
            <person name="Dillon G.P."/>
            <person name="Holroyd N.E."/>
            <person name="LoVerde P.T."/>
            <person name="Lloyd C."/>
            <person name="McQuillan J."/>
            <person name="Oliveira G."/>
            <person name="Otto T.D."/>
            <person name="Parker-Manuel S.J."/>
            <person name="Quail M.A."/>
            <person name="Wilson R.A."/>
            <person name="Zerlotini A."/>
            <person name="Dunne D.W."/>
            <person name="Berriman M."/>
        </authorList>
    </citation>
    <scope>NUCLEOTIDE SEQUENCE [LARGE SCALE GENOMIC DNA]</scope>
    <source>
        <strain>Puerto Rican</strain>
    </source>
</reference>